<proteinExistence type="inferred from homology"/>
<feature type="chain" id="PRO_0000244200" description="Large ribosomal subunit protein bL25">
    <location>
        <begin position="1"/>
        <end position="185"/>
    </location>
</feature>
<organism>
    <name type="scientific">Chlamydia abortus (strain DSM 27085 / S26/3)</name>
    <name type="common">Chlamydophila abortus</name>
    <dbReference type="NCBI Taxonomy" id="218497"/>
    <lineage>
        <taxon>Bacteria</taxon>
        <taxon>Pseudomonadati</taxon>
        <taxon>Chlamydiota</taxon>
        <taxon>Chlamydiia</taxon>
        <taxon>Chlamydiales</taxon>
        <taxon>Chlamydiaceae</taxon>
        <taxon>Chlamydia/Chlamydophila group</taxon>
        <taxon>Chlamydia</taxon>
    </lineage>
</organism>
<comment type="function">
    <text evidence="1">This is one of the proteins that binds to the 5S RNA in the ribosome where it forms part of the central protuberance.</text>
</comment>
<comment type="subunit">
    <text evidence="1">Part of the 50S ribosomal subunit; part of the 5S rRNA/L5/L18/L25 subcomplex. Contacts the 5S rRNA. Binds to the 5S rRNA independently of L5 and L18.</text>
</comment>
<comment type="similarity">
    <text evidence="1">Belongs to the bacterial ribosomal protein bL25 family. CTC subfamily.</text>
</comment>
<dbReference type="EMBL" id="CR848038">
    <property type="protein sequence ID" value="CAH64231.1"/>
    <property type="molecule type" value="Genomic_DNA"/>
</dbReference>
<dbReference type="RefSeq" id="WP_006344395.1">
    <property type="nucleotide sequence ID" value="NC_004552.2"/>
</dbReference>
<dbReference type="SMR" id="Q5L563"/>
<dbReference type="KEGG" id="cab:CAB789"/>
<dbReference type="eggNOG" id="COG1825">
    <property type="taxonomic scope" value="Bacteria"/>
</dbReference>
<dbReference type="HOGENOM" id="CLU_075939_2_1_0"/>
<dbReference type="OrthoDB" id="17764at2"/>
<dbReference type="Proteomes" id="UP000001012">
    <property type="component" value="Chromosome"/>
</dbReference>
<dbReference type="GO" id="GO:0022625">
    <property type="term" value="C:cytosolic large ribosomal subunit"/>
    <property type="evidence" value="ECO:0007669"/>
    <property type="project" value="TreeGrafter"/>
</dbReference>
<dbReference type="GO" id="GO:0008097">
    <property type="term" value="F:5S rRNA binding"/>
    <property type="evidence" value="ECO:0007669"/>
    <property type="project" value="InterPro"/>
</dbReference>
<dbReference type="GO" id="GO:0003735">
    <property type="term" value="F:structural constituent of ribosome"/>
    <property type="evidence" value="ECO:0007669"/>
    <property type="project" value="InterPro"/>
</dbReference>
<dbReference type="GO" id="GO:0006412">
    <property type="term" value="P:translation"/>
    <property type="evidence" value="ECO:0007669"/>
    <property type="project" value="UniProtKB-UniRule"/>
</dbReference>
<dbReference type="CDD" id="cd00495">
    <property type="entry name" value="Ribosomal_L25_TL5_CTC"/>
    <property type="match status" value="1"/>
</dbReference>
<dbReference type="Gene3D" id="2.170.120.20">
    <property type="entry name" value="Ribosomal protein L25, beta domain"/>
    <property type="match status" value="1"/>
</dbReference>
<dbReference type="Gene3D" id="2.40.240.10">
    <property type="entry name" value="Ribosomal Protein L25, Chain P"/>
    <property type="match status" value="1"/>
</dbReference>
<dbReference type="HAMAP" id="MF_01334">
    <property type="entry name" value="Ribosomal_bL25_CTC"/>
    <property type="match status" value="1"/>
</dbReference>
<dbReference type="InterPro" id="IPR020056">
    <property type="entry name" value="Rbsml_bL25/Gln-tRNA_synth_N"/>
</dbReference>
<dbReference type="InterPro" id="IPR011035">
    <property type="entry name" value="Ribosomal_bL25/Gln-tRNA_synth"/>
</dbReference>
<dbReference type="InterPro" id="IPR020057">
    <property type="entry name" value="Ribosomal_bL25_b-dom"/>
</dbReference>
<dbReference type="InterPro" id="IPR037121">
    <property type="entry name" value="Ribosomal_bL25_C"/>
</dbReference>
<dbReference type="InterPro" id="IPR001021">
    <property type="entry name" value="Ribosomal_bL25_long"/>
</dbReference>
<dbReference type="InterPro" id="IPR029751">
    <property type="entry name" value="Ribosomal_L25_dom"/>
</dbReference>
<dbReference type="InterPro" id="IPR020930">
    <property type="entry name" value="Ribosomal_uL5_bac-type"/>
</dbReference>
<dbReference type="NCBIfam" id="TIGR00731">
    <property type="entry name" value="bL25_bact_ctc"/>
    <property type="match status" value="1"/>
</dbReference>
<dbReference type="NCBIfam" id="NF004129">
    <property type="entry name" value="PRK05618.1-4"/>
    <property type="match status" value="1"/>
</dbReference>
<dbReference type="PANTHER" id="PTHR33284">
    <property type="entry name" value="RIBOSOMAL PROTEIN L25/GLN-TRNA SYNTHETASE, ANTI-CODON-BINDING DOMAIN-CONTAINING PROTEIN"/>
    <property type="match status" value="1"/>
</dbReference>
<dbReference type="PANTHER" id="PTHR33284:SF1">
    <property type="entry name" value="RIBOSOMAL PROTEIN L25_GLN-TRNA SYNTHETASE, ANTI-CODON-BINDING DOMAIN-CONTAINING PROTEIN"/>
    <property type="match status" value="1"/>
</dbReference>
<dbReference type="Pfam" id="PF01386">
    <property type="entry name" value="Ribosomal_L25p"/>
    <property type="match status" value="1"/>
</dbReference>
<dbReference type="Pfam" id="PF14693">
    <property type="entry name" value="Ribosomal_TL5_C"/>
    <property type="match status" value="1"/>
</dbReference>
<dbReference type="SUPFAM" id="SSF50715">
    <property type="entry name" value="Ribosomal protein L25-like"/>
    <property type="match status" value="1"/>
</dbReference>
<reference key="1">
    <citation type="journal article" date="2005" name="Genome Res.">
        <title>The Chlamydophila abortus genome sequence reveals an array of variable proteins that contribute to interspecies variation.</title>
        <authorList>
            <person name="Thomson N.R."/>
            <person name="Yeats C."/>
            <person name="Bell K."/>
            <person name="Holden M.T.G."/>
            <person name="Bentley S.D."/>
            <person name="Livingstone M."/>
            <person name="Cerdeno-Tarraga A.-M."/>
            <person name="Harris B."/>
            <person name="Doggett J."/>
            <person name="Ormond D."/>
            <person name="Mungall K."/>
            <person name="Clarke K."/>
            <person name="Feltwell T."/>
            <person name="Hance Z."/>
            <person name="Sanders M."/>
            <person name="Quail M.A."/>
            <person name="Price C."/>
            <person name="Barrell B.G."/>
            <person name="Parkhill J."/>
            <person name="Longbottom D."/>
        </authorList>
    </citation>
    <scope>NUCLEOTIDE SEQUENCE [LARGE SCALE GENOMIC DNA]</scope>
    <source>
        <strain>DSM 27085 / S26/3</strain>
    </source>
</reference>
<evidence type="ECO:0000255" key="1">
    <source>
        <dbReference type="HAMAP-Rule" id="MF_01334"/>
    </source>
</evidence>
<evidence type="ECO:0000305" key="2"/>
<gene>
    <name evidence="1" type="primary">rplY</name>
    <name evidence="1" type="synonym">ctc</name>
    <name type="ordered locus">CAB789</name>
</gene>
<name>RL25_CHLAB</name>
<protein>
    <recommendedName>
        <fullName evidence="1">Large ribosomal subunit protein bL25</fullName>
    </recommendedName>
    <alternativeName>
        <fullName evidence="2">50S ribosomal protein L25</fullName>
    </alternativeName>
    <alternativeName>
        <fullName evidence="1">General stress protein CTC</fullName>
    </alternativeName>
</protein>
<keyword id="KW-0687">Ribonucleoprotein</keyword>
<keyword id="KW-0689">Ribosomal protein</keyword>
<keyword id="KW-0694">RNA-binding</keyword>
<keyword id="KW-0699">rRNA-binding</keyword>
<sequence length="185" mass="20485">MELVVTSRETDKKSLLKKIRQTGGIPAVIYSGGKSLANIVVDAHVFSKFLSSLESGALSSTIFSLSYEGRTIKALVKDIQYHVTSYRVIHLDFEELIEDRDVKLKIPIRCINAVDCVGVKLGGSLRQVIRALRVVCKPKDIVPYLELDVRSLGLSQTRKLSDIQIPAGLRPITPLKEVAVTVSRR</sequence>
<accession>Q5L563</accession>